<comment type="function">
    <text evidence="1">Involved in the anomeric conversion of L-rhamnose.</text>
</comment>
<comment type="catalytic activity">
    <reaction evidence="1">
        <text>alpha-L-rhamnose = beta-L-rhamnose</text>
        <dbReference type="Rhea" id="RHEA:25584"/>
        <dbReference type="ChEBI" id="CHEBI:27586"/>
        <dbReference type="ChEBI" id="CHEBI:27907"/>
        <dbReference type="EC" id="5.1.3.32"/>
    </reaction>
</comment>
<comment type="pathway">
    <text evidence="1">Carbohydrate metabolism; L-rhamnose metabolism.</text>
</comment>
<comment type="subunit">
    <text evidence="1">Homodimer.</text>
</comment>
<comment type="subcellular location">
    <subcellularLocation>
        <location evidence="1">Cytoplasm</location>
    </subcellularLocation>
</comment>
<comment type="similarity">
    <text evidence="1">Belongs to the rhamnose mutarotase family.</text>
</comment>
<feature type="chain" id="PRO_0000344549" description="L-rhamnose mutarotase">
    <location>
        <begin position="1"/>
        <end position="104"/>
    </location>
</feature>
<feature type="active site" description="Proton donor" evidence="1">
    <location>
        <position position="22"/>
    </location>
</feature>
<feature type="binding site" evidence="1">
    <location>
        <position position="18"/>
    </location>
    <ligand>
        <name>substrate</name>
    </ligand>
</feature>
<feature type="binding site" evidence="1">
    <location>
        <position position="41"/>
    </location>
    <ligand>
        <name>substrate</name>
    </ligand>
</feature>
<feature type="binding site" evidence="1">
    <location>
        <begin position="76"/>
        <end position="77"/>
    </location>
    <ligand>
        <name>substrate</name>
    </ligand>
</feature>
<protein>
    <recommendedName>
        <fullName evidence="1">L-rhamnose mutarotase</fullName>
        <ecNumber evidence="1">5.1.3.32</ecNumber>
    </recommendedName>
    <alternativeName>
        <fullName evidence="1">Rhamnose 1-epimerase</fullName>
    </alternativeName>
    <alternativeName>
        <fullName evidence="1">Type-3 mutarotase</fullName>
    </alternativeName>
</protein>
<reference key="1">
    <citation type="submission" date="2007-05" db="EMBL/GenBank/DDBJ databases">
        <title>Complete sequence of chromosome of Acidiphilium cryptum JF-5.</title>
        <authorList>
            <consortium name="US DOE Joint Genome Institute"/>
            <person name="Copeland A."/>
            <person name="Lucas S."/>
            <person name="Lapidus A."/>
            <person name="Barry K."/>
            <person name="Detter J.C."/>
            <person name="Glavina del Rio T."/>
            <person name="Hammon N."/>
            <person name="Israni S."/>
            <person name="Dalin E."/>
            <person name="Tice H."/>
            <person name="Pitluck S."/>
            <person name="Sims D."/>
            <person name="Brettin T."/>
            <person name="Bruce D."/>
            <person name="Han C."/>
            <person name="Schmutz J."/>
            <person name="Larimer F."/>
            <person name="Land M."/>
            <person name="Hauser L."/>
            <person name="Kyrpides N."/>
            <person name="Kim E."/>
            <person name="Magnuson T."/>
            <person name="Richardson P."/>
        </authorList>
    </citation>
    <scope>NUCLEOTIDE SEQUENCE [LARGE SCALE GENOMIC DNA]</scope>
    <source>
        <strain>JF-5</strain>
    </source>
</reference>
<evidence type="ECO:0000255" key="1">
    <source>
        <dbReference type="HAMAP-Rule" id="MF_01663"/>
    </source>
</evidence>
<proteinExistence type="inferred from homology"/>
<gene>
    <name evidence="1" type="primary">rhaM</name>
    <name type="ordered locus">Acry_2981</name>
</gene>
<name>RHAM_ACICJ</name>
<sequence length="104" mass="11935">MEQIAFRMQLDPAQAAEYERRHDEIWPELVAALKDAGISDYSIFLDLSDGSLFAVLRRRPGHAMDALPEQAVMRRWWQAMADIMRTNPDASPTASPLRRVFHLP</sequence>
<accession>A5G2T9</accession>
<keyword id="KW-0119">Carbohydrate metabolism</keyword>
<keyword id="KW-0963">Cytoplasm</keyword>
<keyword id="KW-0413">Isomerase</keyword>
<keyword id="KW-1185">Reference proteome</keyword>
<keyword id="KW-0684">Rhamnose metabolism</keyword>
<dbReference type="EC" id="5.1.3.32" evidence="1"/>
<dbReference type="EMBL" id="CP000697">
    <property type="protein sequence ID" value="ABQ32171.1"/>
    <property type="molecule type" value="Genomic_DNA"/>
</dbReference>
<dbReference type="RefSeq" id="WP_012040457.1">
    <property type="nucleotide sequence ID" value="NC_009484.1"/>
</dbReference>
<dbReference type="SMR" id="A5G2T9"/>
<dbReference type="STRING" id="349163.Acry_2981"/>
<dbReference type="KEGG" id="acr:Acry_2981"/>
<dbReference type="eggNOG" id="COG3254">
    <property type="taxonomic scope" value="Bacteria"/>
</dbReference>
<dbReference type="HOGENOM" id="CLU_100689_2_0_5"/>
<dbReference type="UniPathway" id="UPA00125"/>
<dbReference type="Proteomes" id="UP000000245">
    <property type="component" value="Chromosome"/>
</dbReference>
<dbReference type="GO" id="GO:0005737">
    <property type="term" value="C:cytoplasm"/>
    <property type="evidence" value="ECO:0007669"/>
    <property type="project" value="UniProtKB-SubCell"/>
</dbReference>
<dbReference type="GO" id="GO:0062192">
    <property type="term" value="F:L-rhamnose mutarotase activity"/>
    <property type="evidence" value="ECO:0007669"/>
    <property type="project" value="UniProtKB-EC"/>
</dbReference>
<dbReference type="GO" id="GO:0019301">
    <property type="term" value="P:rhamnose catabolic process"/>
    <property type="evidence" value="ECO:0007669"/>
    <property type="project" value="TreeGrafter"/>
</dbReference>
<dbReference type="Gene3D" id="3.30.70.100">
    <property type="match status" value="1"/>
</dbReference>
<dbReference type="HAMAP" id="MF_01663">
    <property type="entry name" value="L_rham_rotase"/>
    <property type="match status" value="1"/>
</dbReference>
<dbReference type="InterPro" id="IPR011008">
    <property type="entry name" value="Dimeric_a/b-barrel"/>
</dbReference>
<dbReference type="InterPro" id="IPR013448">
    <property type="entry name" value="L-rhamnose_mutarotase"/>
</dbReference>
<dbReference type="InterPro" id="IPR008000">
    <property type="entry name" value="Rham/fucose_mutarotase"/>
</dbReference>
<dbReference type="NCBIfam" id="TIGR02625">
    <property type="entry name" value="YiiL_rotase"/>
    <property type="match status" value="1"/>
</dbReference>
<dbReference type="PANTHER" id="PTHR34389">
    <property type="entry name" value="L-RHAMNOSE MUTAROTASE"/>
    <property type="match status" value="1"/>
</dbReference>
<dbReference type="PANTHER" id="PTHR34389:SF2">
    <property type="entry name" value="L-RHAMNOSE MUTAROTASE"/>
    <property type="match status" value="1"/>
</dbReference>
<dbReference type="Pfam" id="PF05336">
    <property type="entry name" value="rhaM"/>
    <property type="match status" value="1"/>
</dbReference>
<dbReference type="SUPFAM" id="SSF54909">
    <property type="entry name" value="Dimeric alpha+beta barrel"/>
    <property type="match status" value="1"/>
</dbReference>
<organism>
    <name type="scientific">Acidiphilium cryptum (strain JF-5)</name>
    <dbReference type="NCBI Taxonomy" id="349163"/>
    <lineage>
        <taxon>Bacteria</taxon>
        <taxon>Pseudomonadati</taxon>
        <taxon>Pseudomonadota</taxon>
        <taxon>Alphaproteobacteria</taxon>
        <taxon>Acetobacterales</taxon>
        <taxon>Acidocellaceae</taxon>
        <taxon>Acidiphilium</taxon>
    </lineage>
</organism>